<feature type="chain" id="PRO_0000134743" description="6,7-dimethyl-8-ribityllumazine synthase">
    <location>
        <begin position="1"/>
        <end position="155"/>
    </location>
</feature>
<feature type="active site" description="Proton donor" evidence="1">
    <location>
        <position position="88"/>
    </location>
</feature>
<feature type="binding site" evidence="1">
    <location>
        <position position="22"/>
    </location>
    <ligand>
        <name>5-amino-6-(D-ribitylamino)uracil</name>
        <dbReference type="ChEBI" id="CHEBI:15934"/>
    </ligand>
</feature>
<feature type="binding site" evidence="1">
    <location>
        <begin position="56"/>
        <end position="58"/>
    </location>
    <ligand>
        <name>5-amino-6-(D-ribitylamino)uracil</name>
        <dbReference type="ChEBI" id="CHEBI:15934"/>
    </ligand>
</feature>
<feature type="binding site" evidence="1">
    <location>
        <begin position="80"/>
        <end position="82"/>
    </location>
    <ligand>
        <name>5-amino-6-(D-ribitylamino)uracil</name>
        <dbReference type="ChEBI" id="CHEBI:15934"/>
    </ligand>
</feature>
<feature type="binding site" evidence="1">
    <location>
        <begin position="85"/>
        <end position="86"/>
    </location>
    <ligand>
        <name>(2S)-2-hydroxy-3-oxobutyl phosphate</name>
        <dbReference type="ChEBI" id="CHEBI:58830"/>
    </ligand>
</feature>
<feature type="binding site" evidence="1">
    <location>
        <position position="113"/>
    </location>
    <ligand>
        <name>5-amino-6-(D-ribitylamino)uracil</name>
        <dbReference type="ChEBI" id="CHEBI:15934"/>
    </ligand>
</feature>
<feature type="binding site" evidence="1">
    <location>
        <position position="127"/>
    </location>
    <ligand>
        <name>(2S)-2-hydroxy-3-oxobutyl phosphate</name>
        <dbReference type="ChEBI" id="CHEBI:58830"/>
    </ligand>
</feature>
<comment type="function">
    <text evidence="1">Catalyzes the formation of 6,7-dimethyl-8-ribityllumazine by condensation of 5-amino-6-(D-ribitylamino)uracil with 3,4-dihydroxy-2-butanone 4-phosphate. This is the penultimate step in the biosynthesis of riboflavin.</text>
</comment>
<comment type="catalytic activity">
    <reaction evidence="1">
        <text>(2S)-2-hydroxy-3-oxobutyl phosphate + 5-amino-6-(D-ribitylamino)uracil = 6,7-dimethyl-8-(1-D-ribityl)lumazine + phosphate + 2 H2O + H(+)</text>
        <dbReference type="Rhea" id="RHEA:26152"/>
        <dbReference type="ChEBI" id="CHEBI:15377"/>
        <dbReference type="ChEBI" id="CHEBI:15378"/>
        <dbReference type="ChEBI" id="CHEBI:15934"/>
        <dbReference type="ChEBI" id="CHEBI:43474"/>
        <dbReference type="ChEBI" id="CHEBI:58201"/>
        <dbReference type="ChEBI" id="CHEBI:58830"/>
        <dbReference type="EC" id="2.5.1.78"/>
    </reaction>
</comment>
<comment type="pathway">
    <text evidence="1">Cofactor biosynthesis; riboflavin biosynthesis; riboflavin from 2-hydroxy-3-oxobutyl phosphate and 5-amino-6-(D-ribitylamino)uracil: step 1/2.</text>
</comment>
<comment type="similarity">
    <text evidence="1">Belongs to the DMRL synthase family.</text>
</comment>
<protein>
    <recommendedName>
        <fullName evidence="1">6,7-dimethyl-8-ribityllumazine synthase</fullName>
        <shortName evidence="1">DMRL synthase</shortName>
        <shortName evidence="1">LS</shortName>
        <shortName evidence="1">Lumazine synthase</shortName>
        <ecNumber evidence="1">2.5.1.78</ecNumber>
    </recommendedName>
</protein>
<name>RISB_CLOAB</name>
<gene>
    <name evidence="1" type="primary">ribH</name>
    <name type="ordered locus">CA_C0593</name>
</gene>
<sequence length="155" mass="16486">MKIYEGKLISKNLKFGIVAGRFNEFIVSKLLSGAVDALKRHGCDEDSIELAWAPGAFEIPLISQKMAESGKYDAVICLGAVIRGATSHFDYVSSEVSKGIAQTSLKTGCPVIFGVLTTDNIEQAIERAGTKSGNKGFDAAVTAIEMANLIKTIGE</sequence>
<evidence type="ECO:0000255" key="1">
    <source>
        <dbReference type="HAMAP-Rule" id="MF_00178"/>
    </source>
</evidence>
<dbReference type="EC" id="2.5.1.78" evidence="1"/>
<dbReference type="EMBL" id="AE001437">
    <property type="protein sequence ID" value="AAK78571.1"/>
    <property type="molecule type" value="Genomic_DNA"/>
</dbReference>
<dbReference type="PIR" id="H96972">
    <property type="entry name" value="H96972"/>
</dbReference>
<dbReference type="RefSeq" id="NP_347231.1">
    <property type="nucleotide sequence ID" value="NC_003030.1"/>
</dbReference>
<dbReference type="SMR" id="Q97LG8"/>
<dbReference type="STRING" id="272562.CA_C0593"/>
<dbReference type="KEGG" id="cac:CA_C0593"/>
<dbReference type="PATRIC" id="fig|272562.8.peg.796"/>
<dbReference type="eggNOG" id="COG0054">
    <property type="taxonomic scope" value="Bacteria"/>
</dbReference>
<dbReference type="HOGENOM" id="CLU_089358_1_1_9"/>
<dbReference type="OrthoDB" id="9809709at2"/>
<dbReference type="BRENDA" id="2.5.1.78">
    <property type="organism ID" value="1452"/>
</dbReference>
<dbReference type="UniPathway" id="UPA00275">
    <property type="reaction ID" value="UER00404"/>
</dbReference>
<dbReference type="Proteomes" id="UP000000814">
    <property type="component" value="Chromosome"/>
</dbReference>
<dbReference type="GO" id="GO:0005829">
    <property type="term" value="C:cytosol"/>
    <property type="evidence" value="ECO:0007669"/>
    <property type="project" value="TreeGrafter"/>
</dbReference>
<dbReference type="GO" id="GO:0009349">
    <property type="term" value="C:riboflavin synthase complex"/>
    <property type="evidence" value="ECO:0007669"/>
    <property type="project" value="InterPro"/>
</dbReference>
<dbReference type="GO" id="GO:0000906">
    <property type="term" value="F:6,7-dimethyl-8-ribityllumazine synthase activity"/>
    <property type="evidence" value="ECO:0007669"/>
    <property type="project" value="UniProtKB-UniRule"/>
</dbReference>
<dbReference type="GO" id="GO:0009231">
    <property type="term" value="P:riboflavin biosynthetic process"/>
    <property type="evidence" value="ECO:0007669"/>
    <property type="project" value="UniProtKB-UniRule"/>
</dbReference>
<dbReference type="CDD" id="cd09209">
    <property type="entry name" value="Lumazine_synthase-I"/>
    <property type="match status" value="1"/>
</dbReference>
<dbReference type="FunFam" id="3.40.50.960:FF:000001">
    <property type="entry name" value="6,7-dimethyl-8-ribityllumazine synthase"/>
    <property type="match status" value="1"/>
</dbReference>
<dbReference type="Gene3D" id="3.40.50.960">
    <property type="entry name" value="Lumazine/riboflavin synthase"/>
    <property type="match status" value="1"/>
</dbReference>
<dbReference type="HAMAP" id="MF_00178">
    <property type="entry name" value="Lumazine_synth"/>
    <property type="match status" value="1"/>
</dbReference>
<dbReference type="InterPro" id="IPR034964">
    <property type="entry name" value="LS"/>
</dbReference>
<dbReference type="InterPro" id="IPR002180">
    <property type="entry name" value="LS/RS"/>
</dbReference>
<dbReference type="InterPro" id="IPR036467">
    <property type="entry name" value="LS/RS_sf"/>
</dbReference>
<dbReference type="NCBIfam" id="TIGR00114">
    <property type="entry name" value="lumazine-synth"/>
    <property type="match status" value="1"/>
</dbReference>
<dbReference type="NCBIfam" id="NF000812">
    <property type="entry name" value="PRK00061.1-4"/>
    <property type="match status" value="1"/>
</dbReference>
<dbReference type="PANTHER" id="PTHR21058:SF0">
    <property type="entry name" value="6,7-DIMETHYL-8-RIBITYLLUMAZINE SYNTHASE"/>
    <property type="match status" value="1"/>
</dbReference>
<dbReference type="PANTHER" id="PTHR21058">
    <property type="entry name" value="6,7-DIMETHYL-8-RIBITYLLUMAZINE SYNTHASE DMRL SYNTHASE LUMAZINE SYNTHASE"/>
    <property type="match status" value="1"/>
</dbReference>
<dbReference type="Pfam" id="PF00885">
    <property type="entry name" value="DMRL_synthase"/>
    <property type="match status" value="1"/>
</dbReference>
<dbReference type="SUPFAM" id="SSF52121">
    <property type="entry name" value="Lumazine synthase"/>
    <property type="match status" value="1"/>
</dbReference>
<accession>Q97LG8</accession>
<reference key="1">
    <citation type="journal article" date="2001" name="J. Bacteriol.">
        <title>Genome sequence and comparative analysis of the solvent-producing bacterium Clostridium acetobutylicum.</title>
        <authorList>
            <person name="Noelling J."/>
            <person name="Breton G."/>
            <person name="Omelchenko M.V."/>
            <person name="Makarova K.S."/>
            <person name="Zeng Q."/>
            <person name="Gibson R."/>
            <person name="Lee H.M."/>
            <person name="Dubois J."/>
            <person name="Qiu D."/>
            <person name="Hitti J."/>
            <person name="Wolf Y.I."/>
            <person name="Tatusov R.L."/>
            <person name="Sabathe F."/>
            <person name="Doucette-Stamm L.A."/>
            <person name="Soucaille P."/>
            <person name="Daly M.J."/>
            <person name="Bennett G.N."/>
            <person name="Koonin E.V."/>
            <person name="Smith D.R."/>
        </authorList>
    </citation>
    <scope>NUCLEOTIDE SEQUENCE [LARGE SCALE GENOMIC DNA]</scope>
    <source>
        <strain>ATCC 824 / DSM 792 / JCM 1419 / IAM 19013 / LMG 5710 / NBRC 13948 / NRRL B-527 / VKM B-1787 / 2291 / W</strain>
    </source>
</reference>
<keyword id="KW-1185">Reference proteome</keyword>
<keyword id="KW-0686">Riboflavin biosynthesis</keyword>
<keyword id="KW-0808">Transferase</keyword>
<proteinExistence type="inferred from homology"/>
<organism>
    <name type="scientific">Clostridium acetobutylicum (strain ATCC 824 / DSM 792 / JCM 1419 / IAM 19013 / LMG 5710 / NBRC 13948 / NRRL B-527 / VKM B-1787 / 2291 / W)</name>
    <dbReference type="NCBI Taxonomy" id="272562"/>
    <lineage>
        <taxon>Bacteria</taxon>
        <taxon>Bacillati</taxon>
        <taxon>Bacillota</taxon>
        <taxon>Clostridia</taxon>
        <taxon>Eubacteriales</taxon>
        <taxon>Clostridiaceae</taxon>
        <taxon>Clostridium</taxon>
    </lineage>
</organism>